<proteinExistence type="inferred from homology"/>
<sequence>MLDSIKIKLQYLLPKQGLTQLAGWGANKQGGWLTQLVIKAFARYYKVDMKEAQDPEFSAYRTFNEFFVRPLRAGVRPVVAEENLLAQPADGAISQLGAIREGQILQAKGHNYSLEALLAGNYLLAAEFQNGQFVTTYLAPRDYHRVHMPCDGVLREMIYVPGDLFSVNPLTAANVPNLFARNERVICIFDTAFGPMAQILVGATIVGSIETVWAGTITPPREGVIRRWTYPQAGCEGAITLEKGQEMGRFKLGSTVINLFAEGKVYFAPQLNSGAVTRMGEVLAEAVPTTPSY</sequence>
<feature type="chain" id="PRO_0000029723" description="Phosphatidylserine decarboxylase beta chain" evidence="1">
    <location>
        <begin position="1"/>
        <end position="253"/>
    </location>
</feature>
<feature type="chain" id="PRO_0000029724" description="Phosphatidylserine decarboxylase alpha chain" evidence="1">
    <location>
        <begin position="254"/>
        <end position="293"/>
    </location>
</feature>
<feature type="active site" description="Charge relay system; for autoendoproteolytic cleavage activity" evidence="1">
    <location>
        <position position="90"/>
    </location>
</feature>
<feature type="active site" description="Charge relay system; for autoendoproteolytic cleavage activity" evidence="1">
    <location>
        <position position="147"/>
    </location>
</feature>
<feature type="active site" description="Charge relay system; for autoendoproteolytic cleavage activity" evidence="1">
    <location>
        <position position="254"/>
    </location>
</feature>
<feature type="active site" description="Schiff-base intermediate with substrate; via pyruvic acid; for decarboxylase activity" evidence="1">
    <location>
        <position position="254"/>
    </location>
</feature>
<feature type="site" description="Cleavage (non-hydrolytic); by autocatalysis" evidence="1">
    <location>
        <begin position="253"/>
        <end position="254"/>
    </location>
</feature>
<feature type="modified residue" description="Pyruvic acid (Ser); by autocatalysis" evidence="1">
    <location>
        <position position="254"/>
    </location>
</feature>
<name>PSD_YERPE</name>
<dbReference type="EC" id="4.1.1.65" evidence="1"/>
<dbReference type="EMBL" id="AL590842">
    <property type="protein sequence ID" value="CAL19046.1"/>
    <property type="molecule type" value="Genomic_DNA"/>
</dbReference>
<dbReference type="EMBL" id="AE009952">
    <property type="protein sequence ID" value="AAM84208.1"/>
    <property type="molecule type" value="Genomic_DNA"/>
</dbReference>
<dbReference type="EMBL" id="AE017042">
    <property type="protein sequence ID" value="AAS60789.1"/>
    <property type="molecule type" value="Genomic_DNA"/>
</dbReference>
<dbReference type="PIR" id="AD0045">
    <property type="entry name" value="AD0045"/>
</dbReference>
<dbReference type="RefSeq" id="YP_002345442.1">
    <property type="nucleotide sequence ID" value="NC_003143.1"/>
</dbReference>
<dbReference type="SMR" id="Q8ZIX1"/>
<dbReference type="STRING" id="214092.YPO0364"/>
<dbReference type="PaxDb" id="214092-YPO0364"/>
<dbReference type="DNASU" id="1145567"/>
<dbReference type="EnsemblBacteria" id="AAS60789">
    <property type="protein sequence ID" value="AAS60789"/>
    <property type="gene ID" value="YP_0519"/>
</dbReference>
<dbReference type="KEGG" id="ype:YPO0364"/>
<dbReference type="KEGG" id="ypk:y0620"/>
<dbReference type="KEGG" id="ypm:YP_0519"/>
<dbReference type="PATRIC" id="fig|214092.21.peg.599"/>
<dbReference type="eggNOG" id="COG0688">
    <property type="taxonomic scope" value="Bacteria"/>
</dbReference>
<dbReference type="HOGENOM" id="CLU_029061_4_1_6"/>
<dbReference type="OMA" id="KDYHHYH"/>
<dbReference type="OrthoDB" id="9802030at2"/>
<dbReference type="UniPathway" id="UPA00558">
    <property type="reaction ID" value="UER00616"/>
</dbReference>
<dbReference type="Proteomes" id="UP000000815">
    <property type="component" value="Chromosome"/>
</dbReference>
<dbReference type="Proteomes" id="UP000001019">
    <property type="component" value="Chromosome"/>
</dbReference>
<dbReference type="Proteomes" id="UP000002490">
    <property type="component" value="Chromosome"/>
</dbReference>
<dbReference type="GO" id="GO:0005886">
    <property type="term" value="C:plasma membrane"/>
    <property type="evidence" value="ECO:0007669"/>
    <property type="project" value="UniProtKB-SubCell"/>
</dbReference>
<dbReference type="GO" id="GO:0004609">
    <property type="term" value="F:phosphatidylserine decarboxylase activity"/>
    <property type="evidence" value="ECO:0000318"/>
    <property type="project" value="GO_Central"/>
</dbReference>
<dbReference type="GO" id="GO:0006646">
    <property type="term" value="P:phosphatidylethanolamine biosynthetic process"/>
    <property type="evidence" value="ECO:0000318"/>
    <property type="project" value="GO_Central"/>
</dbReference>
<dbReference type="HAMAP" id="MF_00662">
    <property type="entry name" value="PS_decarb_PSD_B_type1"/>
    <property type="match status" value="1"/>
</dbReference>
<dbReference type="InterPro" id="IPR003817">
    <property type="entry name" value="PS_Dcarbxylase"/>
</dbReference>
<dbReference type="InterPro" id="IPR033177">
    <property type="entry name" value="PSD-B"/>
</dbReference>
<dbReference type="InterPro" id="IPR033178">
    <property type="entry name" value="PSD_type1_pro"/>
</dbReference>
<dbReference type="NCBIfam" id="TIGR00163">
    <property type="entry name" value="PS_decarb"/>
    <property type="match status" value="1"/>
</dbReference>
<dbReference type="PANTHER" id="PTHR10067">
    <property type="entry name" value="PHOSPHATIDYLSERINE DECARBOXYLASE"/>
    <property type="match status" value="1"/>
</dbReference>
<dbReference type="PANTHER" id="PTHR10067:SF6">
    <property type="entry name" value="PHOSPHATIDYLSERINE DECARBOXYLASE PROENZYME, MITOCHONDRIAL"/>
    <property type="match status" value="1"/>
</dbReference>
<dbReference type="Pfam" id="PF02666">
    <property type="entry name" value="PS_Dcarbxylase"/>
    <property type="match status" value="1"/>
</dbReference>
<comment type="function">
    <text evidence="1">Catalyzes the formation of phosphatidylethanolamine (PtdEtn) from phosphatidylserine (PtdSer).</text>
</comment>
<comment type="catalytic activity">
    <reaction evidence="1">
        <text>a 1,2-diacyl-sn-glycero-3-phospho-L-serine + H(+) = a 1,2-diacyl-sn-glycero-3-phosphoethanolamine + CO2</text>
        <dbReference type="Rhea" id="RHEA:20828"/>
        <dbReference type="ChEBI" id="CHEBI:15378"/>
        <dbReference type="ChEBI" id="CHEBI:16526"/>
        <dbReference type="ChEBI" id="CHEBI:57262"/>
        <dbReference type="ChEBI" id="CHEBI:64612"/>
        <dbReference type="EC" id="4.1.1.65"/>
    </reaction>
</comment>
<comment type="cofactor">
    <cofactor evidence="1">
        <name>pyruvate</name>
        <dbReference type="ChEBI" id="CHEBI:15361"/>
    </cofactor>
    <text evidence="1">Binds 1 pyruvoyl group covalently per subunit.</text>
</comment>
<comment type="pathway">
    <text evidence="1">Phospholipid metabolism; phosphatidylethanolamine biosynthesis; phosphatidylethanolamine from CDP-diacylglycerol: step 2/2.</text>
</comment>
<comment type="subunit">
    <text evidence="1">Heterodimer of a large membrane-associated beta subunit and a small pyruvoyl-containing alpha subunit.</text>
</comment>
<comment type="subcellular location">
    <subcellularLocation>
        <location evidence="1">Cell membrane</location>
        <topology evidence="1">Peripheral membrane protein</topology>
    </subcellularLocation>
</comment>
<comment type="PTM">
    <text evidence="1">Is synthesized initially as an inactive proenzyme. Formation of the active enzyme involves a self-maturation process in which the active site pyruvoyl group is generated from an internal serine residue via an autocatalytic post-translational modification. Two non-identical subunits are generated from the proenzyme in this reaction, and the pyruvate is formed at the N-terminus of the alpha chain, which is derived from the carboxyl end of the proenzyme. The autoendoproteolytic cleavage occurs by a canonical serine protease mechanism, in which the side chain hydroxyl group of the serine supplies its oxygen atom to form the C-terminus of the beta chain, while the remainder of the serine residue undergoes an oxidative deamination to produce ammonia and the pyruvoyl prosthetic group on the alpha chain. During this reaction, the Ser that is part of the protease active site of the proenzyme becomes the pyruvoyl prosthetic group, which constitutes an essential element of the active site of the mature decarboxylase.</text>
</comment>
<comment type="similarity">
    <text evidence="1">Belongs to the phosphatidylserine decarboxylase family. PSD-B subfamily. Prokaryotic type I sub-subfamily.</text>
</comment>
<accession>Q8ZIX1</accession>
<accession>Q0WJU6</accession>
<reference key="1">
    <citation type="journal article" date="2001" name="Nature">
        <title>Genome sequence of Yersinia pestis, the causative agent of plague.</title>
        <authorList>
            <person name="Parkhill J."/>
            <person name="Wren B.W."/>
            <person name="Thomson N.R."/>
            <person name="Titball R.W."/>
            <person name="Holden M.T.G."/>
            <person name="Prentice M.B."/>
            <person name="Sebaihia M."/>
            <person name="James K.D."/>
            <person name="Churcher C.M."/>
            <person name="Mungall K.L."/>
            <person name="Baker S."/>
            <person name="Basham D."/>
            <person name="Bentley S.D."/>
            <person name="Brooks K."/>
            <person name="Cerdeno-Tarraga A.-M."/>
            <person name="Chillingworth T."/>
            <person name="Cronin A."/>
            <person name="Davies R.M."/>
            <person name="Davis P."/>
            <person name="Dougan G."/>
            <person name="Feltwell T."/>
            <person name="Hamlin N."/>
            <person name="Holroyd S."/>
            <person name="Jagels K."/>
            <person name="Karlyshev A.V."/>
            <person name="Leather S."/>
            <person name="Moule S."/>
            <person name="Oyston P.C.F."/>
            <person name="Quail M.A."/>
            <person name="Rutherford K.M."/>
            <person name="Simmonds M."/>
            <person name="Skelton J."/>
            <person name="Stevens K."/>
            <person name="Whitehead S."/>
            <person name="Barrell B.G."/>
        </authorList>
    </citation>
    <scope>NUCLEOTIDE SEQUENCE [LARGE SCALE GENOMIC DNA]</scope>
    <source>
        <strain>CO-92 / Biovar Orientalis</strain>
    </source>
</reference>
<reference key="2">
    <citation type="journal article" date="2002" name="J. Bacteriol.">
        <title>Genome sequence of Yersinia pestis KIM.</title>
        <authorList>
            <person name="Deng W."/>
            <person name="Burland V."/>
            <person name="Plunkett G. III"/>
            <person name="Boutin A."/>
            <person name="Mayhew G.F."/>
            <person name="Liss P."/>
            <person name="Perna N.T."/>
            <person name="Rose D.J."/>
            <person name="Mau B."/>
            <person name="Zhou S."/>
            <person name="Schwartz D.C."/>
            <person name="Fetherston J.D."/>
            <person name="Lindler L.E."/>
            <person name="Brubaker R.R."/>
            <person name="Plano G.V."/>
            <person name="Straley S.C."/>
            <person name="McDonough K.A."/>
            <person name="Nilles M.L."/>
            <person name="Matson J.S."/>
            <person name="Blattner F.R."/>
            <person name="Perry R.D."/>
        </authorList>
    </citation>
    <scope>NUCLEOTIDE SEQUENCE [LARGE SCALE GENOMIC DNA]</scope>
    <source>
        <strain>KIM10+ / Biovar Mediaevalis</strain>
    </source>
</reference>
<reference key="3">
    <citation type="journal article" date="2004" name="DNA Res.">
        <title>Complete genome sequence of Yersinia pestis strain 91001, an isolate avirulent to humans.</title>
        <authorList>
            <person name="Song Y."/>
            <person name="Tong Z."/>
            <person name="Wang J."/>
            <person name="Wang L."/>
            <person name="Guo Z."/>
            <person name="Han Y."/>
            <person name="Zhang J."/>
            <person name="Pei D."/>
            <person name="Zhou D."/>
            <person name="Qin H."/>
            <person name="Pang X."/>
            <person name="Han Y."/>
            <person name="Zhai J."/>
            <person name="Li M."/>
            <person name="Cui B."/>
            <person name="Qi Z."/>
            <person name="Jin L."/>
            <person name="Dai R."/>
            <person name="Chen F."/>
            <person name="Li S."/>
            <person name="Ye C."/>
            <person name="Du Z."/>
            <person name="Lin W."/>
            <person name="Wang J."/>
            <person name="Yu J."/>
            <person name="Yang H."/>
            <person name="Wang J."/>
            <person name="Huang P."/>
            <person name="Yang R."/>
        </authorList>
    </citation>
    <scope>NUCLEOTIDE SEQUENCE [LARGE SCALE GENOMIC DNA]</scope>
    <source>
        <strain>91001 / Biovar Mediaevalis</strain>
    </source>
</reference>
<keyword id="KW-1003">Cell membrane</keyword>
<keyword id="KW-0210">Decarboxylase</keyword>
<keyword id="KW-0444">Lipid biosynthesis</keyword>
<keyword id="KW-0443">Lipid metabolism</keyword>
<keyword id="KW-0456">Lyase</keyword>
<keyword id="KW-0472">Membrane</keyword>
<keyword id="KW-0594">Phospholipid biosynthesis</keyword>
<keyword id="KW-1208">Phospholipid metabolism</keyword>
<keyword id="KW-0670">Pyruvate</keyword>
<keyword id="KW-1185">Reference proteome</keyword>
<keyword id="KW-0865">Zymogen</keyword>
<organism>
    <name type="scientific">Yersinia pestis</name>
    <dbReference type="NCBI Taxonomy" id="632"/>
    <lineage>
        <taxon>Bacteria</taxon>
        <taxon>Pseudomonadati</taxon>
        <taxon>Pseudomonadota</taxon>
        <taxon>Gammaproteobacteria</taxon>
        <taxon>Enterobacterales</taxon>
        <taxon>Yersiniaceae</taxon>
        <taxon>Yersinia</taxon>
    </lineage>
</organism>
<protein>
    <recommendedName>
        <fullName evidence="1">Phosphatidylserine decarboxylase proenzyme</fullName>
        <ecNumber evidence="1">4.1.1.65</ecNumber>
    </recommendedName>
    <component>
        <recommendedName>
            <fullName evidence="1">Phosphatidylserine decarboxylase alpha chain</fullName>
        </recommendedName>
    </component>
    <component>
        <recommendedName>
            <fullName evidence="1">Phosphatidylserine decarboxylase beta chain</fullName>
        </recommendedName>
    </component>
</protein>
<gene>
    <name evidence="1" type="primary">psd</name>
    <name type="ordered locus">YPO0364</name>
    <name type="ordered locus">y0620</name>
    <name type="ordered locus">YP_0519</name>
</gene>
<evidence type="ECO:0000255" key="1">
    <source>
        <dbReference type="HAMAP-Rule" id="MF_00662"/>
    </source>
</evidence>